<name>GUAA_STRS7</name>
<feature type="chain" id="PRO_1000205310" description="GMP synthase [glutamine-hydrolyzing]">
    <location>
        <begin position="1"/>
        <end position="520"/>
    </location>
</feature>
<feature type="domain" description="Glutamine amidotransferase type-1" evidence="1">
    <location>
        <begin position="12"/>
        <end position="205"/>
    </location>
</feature>
<feature type="domain" description="GMPS ATP-PPase" evidence="1">
    <location>
        <begin position="206"/>
        <end position="395"/>
    </location>
</feature>
<feature type="active site" description="Nucleophile" evidence="1">
    <location>
        <position position="89"/>
    </location>
</feature>
<feature type="active site" evidence="1">
    <location>
        <position position="179"/>
    </location>
</feature>
<feature type="active site" evidence="1">
    <location>
        <position position="181"/>
    </location>
</feature>
<feature type="binding site" evidence="1">
    <location>
        <begin position="233"/>
        <end position="239"/>
    </location>
    <ligand>
        <name>ATP</name>
        <dbReference type="ChEBI" id="CHEBI:30616"/>
    </ligand>
</feature>
<proteinExistence type="inferred from homology"/>
<sequence length="520" mass="57422">MTEISMLNDVQKIIVLDYGSQYNQLIARRIREFGVFSELKSHNITAQELRDINPIGIVLSGGPNSVYADDAFGIDPEIFELGIPILGICYGMQLITHTLGGKVVPAGQAGHREYGQSSLRLRSASALFAGTPDEQLVLMSHGDAVTEIPEGFHLVGDSNDCPYAAMENTKKRLYGIQFHPEVRHSVYGNDILKNFAISICGARGDWSMDNFIDMEIAKIRKTVGDRKVLLGLSGGVDSSVVGVLLQKAIGDQLTCIFVDHGLLRKNEGDQVMEMLGGRFGLNIIRVDASKRFLDLLAGVEDPEKKRKIIGNEFVYVFDDEASKLEGVDFLAQGTLYTDIIESGTETAQTIKSHHNVGGLPEDMQFELIEPLNTLFKDEVRALGTALGMPDEVVWRQPFPGPGLAIRIMGEITAEKLETVRESDAILREEIAKAGLDRDVWQYFTVNTGVRSVGVMGDGRTYDYTIAIRAITSIDGMTADFAQLPWEVLKKISVRIVNEVDHVNRIVYDITSKPPATVEWE</sequence>
<organism>
    <name type="scientific">Streptococcus equi subsp. zooepidemicus (strain H70)</name>
    <dbReference type="NCBI Taxonomy" id="553483"/>
    <lineage>
        <taxon>Bacteria</taxon>
        <taxon>Bacillati</taxon>
        <taxon>Bacillota</taxon>
        <taxon>Bacilli</taxon>
        <taxon>Lactobacillales</taxon>
        <taxon>Streptococcaceae</taxon>
        <taxon>Streptococcus</taxon>
    </lineage>
</organism>
<keyword id="KW-0067">ATP-binding</keyword>
<keyword id="KW-0315">Glutamine amidotransferase</keyword>
<keyword id="KW-0332">GMP biosynthesis</keyword>
<keyword id="KW-0436">Ligase</keyword>
<keyword id="KW-0547">Nucleotide-binding</keyword>
<keyword id="KW-0658">Purine biosynthesis</keyword>
<gene>
    <name evidence="1" type="primary">guaA</name>
    <name type="ordered locus">SZO_09540</name>
</gene>
<accession>C0MFC7</accession>
<protein>
    <recommendedName>
        <fullName evidence="1">GMP synthase [glutamine-hydrolyzing]</fullName>
        <ecNumber evidence="1">6.3.5.2</ecNumber>
    </recommendedName>
    <alternativeName>
        <fullName evidence="1">GMP synthetase</fullName>
    </alternativeName>
    <alternativeName>
        <fullName evidence="1">Glutamine amidotransferase</fullName>
    </alternativeName>
</protein>
<evidence type="ECO:0000255" key="1">
    <source>
        <dbReference type="HAMAP-Rule" id="MF_00344"/>
    </source>
</evidence>
<reference key="1">
    <citation type="journal article" date="2009" name="PLoS Pathog.">
        <title>Genomic evidence for the evolution of Streptococcus equi: host restriction, increased virulence, and genetic exchange with human pathogens.</title>
        <authorList>
            <person name="Holden M.T.G."/>
            <person name="Heather Z."/>
            <person name="Paillot R."/>
            <person name="Steward K.F."/>
            <person name="Webb K."/>
            <person name="Ainslie F."/>
            <person name="Jourdan T."/>
            <person name="Bason N.C."/>
            <person name="Holroyd N.E."/>
            <person name="Mungall K."/>
            <person name="Quail M.A."/>
            <person name="Sanders M."/>
            <person name="Simmonds M."/>
            <person name="Willey D."/>
            <person name="Brooks K."/>
            <person name="Aanensen D.M."/>
            <person name="Spratt B.G."/>
            <person name="Jolley K.A."/>
            <person name="Maiden M.C.J."/>
            <person name="Kehoe M."/>
            <person name="Chanter N."/>
            <person name="Bentley S.D."/>
            <person name="Robinson C."/>
            <person name="Maskell D.J."/>
            <person name="Parkhill J."/>
            <person name="Waller A.S."/>
        </authorList>
    </citation>
    <scope>NUCLEOTIDE SEQUENCE [LARGE SCALE GENOMIC DNA]</scope>
    <source>
        <strain>H70</strain>
    </source>
</reference>
<dbReference type="EC" id="6.3.5.2" evidence="1"/>
<dbReference type="EMBL" id="FM204884">
    <property type="protein sequence ID" value="CAW99237.1"/>
    <property type="molecule type" value="Genomic_DNA"/>
</dbReference>
<dbReference type="SMR" id="C0MFC7"/>
<dbReference type="MEROPS" id="C26.957"/>
<dbReference type="KEGG" id="seq:SZO_09540"/>
<dbReference type="PATRIC" id="fig|40041.11.peg.1013"/>
<dbReference type="eggNOG" id="COG0518">
    <property type="taxonomic scope" value="Bacteria"/>
</dbReference>
<dbReference type="eggNOG" id="COG0519">
    <property type="taxonomic scope" value="Bacteria"/>
</dbReference>
<dbReference type="HOGENOM" id="CLU_014340_0_5_9"/>
<dbReference type="UniPathway" id="UPA00189">
    <property type="reaction ID" value="UER00296"/>
</dbReference>
<dbReference type="Proteomes" id="UP000001368">
    <property type="component" value="Chromosome"/>
</dbReference>
<dbReference type="GO" id="GO:0005829">
    <property type="term" value="C:cytosol"/>
    <property type="evidence" value="ECO:0007669"/>
    <property type="project" value="TreeGrafter"/>
</dbReference>
<dbReference type="GO" id="GO:0005524">
    <property type="term" value="F:ATP binding"/>
    <property type="evidence" value="ECO:0007669"/>
    <property type="project" value="UniProtKB-UniRule"/>
</dbReference>
<dbReference type="GO" id="GO:0003921">
    <property type="term" value="F:GMP synthase activity"/>
    <property type="evidence" value="ECO:0007669"/>
    <property type="project" value="InterPro"/>
</dbReference>
<dbReference type="CDD" id="cd01742">
    <property type="entry name" value="GATase1_GMP_Synthase"/>
    <property type="match status" value="1"/>
</dbReference>
<dbReference type="CDD" id="cd01997">
    <property type="entry name" value="GMP_synthase_C"/>
    <property type="match status" value="1"/>
</dbReference>
<dbReference type="FunFam" id="3.30.300.10:FF:000002">
    <property type="entry name" value="GMP synthase [glutamine-hydrolyzing]"/>
    <property type="match status" value="1"/>
</dbReference>
<dbReference type="FunFam" id="3.40.50.620:FF:000001">
    <property type="entry name" value="GMP synthase [glutamine-hydrolyzing]"/>
    <property type="match status" value="1"/>
</dbReference>
<dbReference type="FunFam" id="3.40.50.880:FF:000001">
    <property type="entry name" value="GMP synthase [glutamine-hydrolyzing]"/>
    <property type="match status" value="1"/>
</dbReference>
<dbReference type="Gene3D" id="3.30.300.10">
    <property type="match status" value="1"/>
</dbReference>
<dbReference type="Gene3D" id="3.40.50.880">
    <property type="match status" value="1"/>
</dbReference>
<dbReference type="Gene3D" id="3.40.50.620">
    <property type="entry name" value="HUPs"/>
    <property type="match status" value="1"/>
</dbReference>
<dbReference type="HAMAP" id="MF_00344">
    <property type="entry name" value="GMP_synthase"/>
    <property type="match status" value="1"/>
</dbReference>
<dbReference type="InterPro" id="IPR029062">
    <property type="entry name" value="Class_I_gatase-like"/>
</dbReference>
<dbReference type="InterPro" id="IPR017926">
    <property type="entry name" value="GATASE"/>
</dbReference>
<dbReference type="InterPro" id="IPR001674">
    <property type="entry name" value="GMP_synth_C"/>
</dbReference>
<dbReference type="InterPro" id="IPR004739">
    <property type="entry name" value="GMP_synth_GATase"/>
</dbReference>
<dbReference type="InterPro" id="IPR022955">
    <property type="entry name" value="GMP_synthase"/>
</dbReference>
<dbReference type="InterPro" id="IPR025777">
    <property type="entry name" value="GMPS_ATP_PPase_dom"/>
</dbReference>
<dbReference type="InterPro" id="IPR022310">
    <property type="entry name" value="NAD/GMP_synthase"/>
</dbReference>
<dbReference type="InterPro" id="IPR014729">
    <property type="entry name" value="Rossmann-like_a/b/a_fold"/>
</dbReference>
<dbReference type="NCBIfam" id="TIGR00884">
    <property type="entry name" value="guaA_Cterm"/>
    <property type="match status" value="1"/>
</dbReference>
<dbReference type="NCBIfam" id="TIGR00888">
    <property type="entry name" value="guaA_Nterm"/>
    <property type="match status" value="1"/>
</dbReference>
<dbReference type="NCBIfam" id="NF000848">
    <property type="entry name" value="PRK00074.1"/>
    <property type="match status" value="1"/>
</dbReference>
<dbReference type="PANTHER" id="PTHR11922:SF2">
    <property type="entry name" value="GMP SYNTHASE [GLUTAMINE-HYDROLYZING]"/>
    <property type="match status" value="1"/>
</dbReference>
<dbReference type="PANTHER" id="PTHR11922">
    <property type="entry name" value="GMP SYNTHASE-RELATED"/>
    <property type="match status" value="1"/>
</dbReference>
<dbReference type="Pfam" id="PF00117">
    <property type="entry name" value="GATase"/>
    <property type="match status" value="1"/>
</dbReference>
<dbReference type="Pfam" id="PF00958">
    <property type="entry name" value="GMP_synt_C"/>
    <property type="match status" value="1"/>
</dbReference>
<dbReference type="Pfam" id="PF02540">
    <property type="entry name" value="NAD_synthase"/>
    <property type="match status" value="1"/>
</dbReference>
<dbReference type="PRINTS" id="PR00097">
    <property type="entry name" value="ANTSNTHASEII"/>
</dbReference>
<dbReference type="PRINTS" id="PR00099">
    <property type="entry name" value="CPSGATASE"/>
</dbReference>
<dbReference type="PRINTS" id="PR00096">
    <property type="entry name" value="GATASE"/>
</dbReference>
<dbReference type="SUPFAM" id="SSF52402">
    <property type="entry name" value="Adenine nucleotide alpha hydrolases-like"/>
    <property type="match status" value="1"/>
</dbReference>
<dbReference type="SUPFAM" id="SSF52317">
    <property type="entry name" value="Class I glutamine amidotransferase-like"/>
    <property type="match status" value="1"/>
</dbReference>
<dbReference type="SUPFAM" id="SSF54810">
    <property type="entry name" value="GMP synthetase C-terminal dimerisation domain"/>
    <property type="match status" value="1"/>
</dbReference>
<dbReference type="PROSITE" id="PS51273">
    <property type="entry name" value="GATASE_TYPE_1"/>
    <property type="match status" value="1"/>
</dbReference>
<dbReference type="PROSITE" id="PS51553">
    <property type="entry name" value="GMPS_ATP_PPASE"/>
    <property type="match status" value="1"/>
</dbReference>
<comment type="function">
    <text evidence="1">Catalyzes the synthesis of GMP from XMP.</text>
</comment>
<comment type="catalytic activity">
    <reaction evidence="1">
        <text>XMP + L-glutamine + ATP + H2O = GMP + L-glutamate + AMP + diphosphate + 2 H(+)</text>
        <dbReference type="Rhea" id="RHEA:11680"/>
        <dbReference type="ChEBI" id="CHEBI:15377"/>
        <dbReference type="ChEBI" id="CHEBI:15378"/>
        <dbReference type="ChEBI" id="CHEBI:29985"/>
        <dbReference type="ChEBI" id="CHEBI:30616"/>
        <dbReference type="ChEBI" id="CHEBI:33019"/>
        <dbReference type="ChEBI" id="CHEBI:57464"/>
        <dbReference type="ChEBI" id="CHEBI:58115"/>
        <dbReference type="ChEBI" id="CHEBI:58359"/>
        <dbReference type="ChEBI" id="CHEBI:456215"/>
        <dbReference type="EC" id="6.3.5.2"/>
    </reaction>
</comment>
<comment type="pathway">
    <text evidence="1">Purine metabolism; GMP biosynthesis; GMP from XMP (L-Gln route): step 1/1.</text>
</comment>
<comment type="subunit">
    <text evidence="1">Homodimer.</text>
</comment>